<organism>
    <name type="scientific">Azemiops feae</name>
    <name type="common">Fea's viper</name>
    <dbReference type="NCBI Taxonomy" id="8773"/>
    <lineage>
        <taxon>Eukaryota</taxon>
        <taxon>Metazoa</taxon>
        <taxon>Chordata</taxon>
        <taxon>Craniata</taxon>
        <taxon>Vertebrata</taxon>
        <taxon>Euteleostomi</taxon>
        <taxon>Lepidosauria</taxon>
        <taxon>Squamata</taxon>
        <taxon>Bifurcata</taxon>
        <taxon>Unidentata</taxon>
        <taxon>Episquamata</taxon>
        <taxon>Toxicofera</taxon>
        <taxon>Serpentes</taxon>
        <taxon>Colubroidea</taxon>
        <taxon>Viperidae</taxon>
        <taxon>Azemiopinae</taxon>
        <taxon>Azemiops</taxon>
    </lineage>
</organism>
<protein>
    <recommendedName>
        <fullName evidence="3">Azemiopsin</fullName>
    </recommendedName>
</protein>
<reference evidence="4" key="1">
    <citation type="journal article" date="2012" name="J. Biol. Chem.">
        <title>Azemiopsin from Azemiops feae viper venom, a novel polypeptide ligand of nicotinic acetylcholine receptor.</title>
        <authorList>
            <person name="Utkin Y.N."/>
            <person name="Weise C."/>
            <person name="Kasheverov I.E."/>
            <person name="Andreeva T.V."/>
            <person name="Kryukova E.V."/>
            <person name="Zhmak M.N."/>
            <person name="Starkov V.G."/>
            <person name="Hoang N.A."/>
            <person name="Bertrand D."/>
            <person name="Ramerstorfer J."/>
            <person name="Sieghart W."/>
            <person name="Thompson A.J."/>
            <person name="Lummis S.C."/>
            <person name="Tsetlin V.I."/>
        </authorList>
    </citation>
    <scope>PROTEIN SEQUENCE</scope>
    <scope>FUNCTION</scope>
    <scope>SUBUNIT</scope>
    <scope>MASS SPECTROMETRY</scope>
    <scope>TOXIC DOSE</scope>
    <scope>MUTAGENESIS OF ASP-1; ASN-2; TRP-3; TRP-4; PRO-5; LYS-6; PRO-7; PRO-8; HIS-9; GLN-10; GLY-11; PRO-12; ARG-13; PRO-14; PRO-15; ARG-16; PRO-17; ARG-18; PRO-19; LYS-20 AND PRO-21</scope>
    <source>
        <tissue evidence="2">Venom</tissue>
    </source>
</reference>
<feature type="peptide" id="PRO_0000420621" description="Azemiopsin" evidence="2">
    <location>
        <begin position="1"/>
        <end position="21"/>
    </location>
</feature>
<feature type="region of interest" description="Disordered" evidence="1">
    <location>
        <begin position="1"/>
        <end position="21"/>
    </location>
</feature>
<feature type="region of interest" description="Implicated in receptor binding" evidence="2">
    <location>
        <begin position="3"/>
        <end position="6"/>
    </location>
</feature>
<feature type="region of interest" description="Implicated in receptor binding" evidence="2">
    <location>
        <begin position="8"/>
        <end position="11"/>
    </location>
</feature>
<feature type="region of interest" description="Implicated in receptor binding" evidence="2">
    <location>
        <begin position="13"/>
        <end position="14"/>
    </location>
</feature>
<feature type="compositionally biased region" description="Pro residues" evidence="1">
    <location>
        <begin position="1"/>
        <end position="14"/>
    </location>
</feature>
<feature type="mutagenesis site" description="No effect on binding to nAChR from T.californica." evidence="2">
    <original>D</original>
    <variation>A</variation>
    <location>
        <position position="1"/>
    </location>
</feature>
<feature type="mutagenesis site" description="No effect on binding to nAChR from T.californica." evidence="2">
    <original>N</original>
    <variation>A</variation>
    <location>
        <position position="2"/>
    </location>
</feature>
<feature type="mutagenesis site" description="Moderate effect on binding to nAChR from T.californica." evidence="2">
    <original>W</original>
    <variation>A</variation>
    <location>
        <position position="3"/>
    </location>
</feature>
<feature type="mutagenesis site" description="Severe effect on binding to nAChR from T.californica." evidence="2">
    <original>W</original>
    <variation>A</variation>
    <location>
        <position position="4"/>
    </location>
</feature>
<feature type="mutagenesis site" description="Severe effect on binding to nAChR from T.californica." evidence="2">
    <original>P</original>
    <variation>A</variation>
    <location>
        <position position="5"/>
    </location>
</feature>
<feature type="mutagenesis site" description="Severe effect on binding to nAChR from T.californica." evidence="2">
    <original>K</original>
    <variation>A</variation>
    <location>
        <position position="6"/>
    </location>
</feature>
<feature type="mutagenesis site" description="No effect on binding to nAChR from T.californica." evidence="2">
    <original>P</original>
    <variation>A</variation>
    <location>
        <position position="7"/>
    </location>
</feature>
<feature type="mutagenesis site" description="Complete loss of binding to nAChR from T.californica." evidence="2">
    <original>P</original>
    <variation>A</variation>
    <location>
        <position position="8"/>
    </location>
</feature>
<feature type="mutagenesis site" description="Complete loss of binding to nAChR from T.californica." evidence="2">
    <original>H</original>
    <variation>A</variation>
    <location>
        <position position="9"/>
    </location>
</feature>
<feature type="mutagenesis site" description="Severe effect on binding to nAChR from T.californica." evidence="2">
    <original>Q</original>
    <variation>A</variation>
    <location>
        <position position="10"/>
    </location>
</feature>
<feature type="mutagenesis site" description="Severe effect on binding to nAChR from T.californica." evidence="2">
    <original>G</original>
    <variation>A</variation>
    <location>
        <position position="11"/>
    </location>
</feature>
<feature type="mutagenesis site" description="No effect on binding to nAChR from T.californica." evidence="2">
    <original>P</original>
    <variation>A</variation>
    <location>
        <position position="12"/>
    </location>
</feature>
<feature type="mutagenesis site" description="Severe effect on binding to nAChR from T.californica." evidence="2">
    <original>R</original>
    <variation>A</variation>
    <location>
        <position position="13"/>
    </location>
</feature>
<feature type="mutagenesis site" description="Moderate effect on binding to nAChR from T.californica." evidence="2">
    <original>P</original>
    <variation>A</variation>
    <location>
        <position position="14"/>
    </location>
</feature>
<feature type="mutagenesis site" description="No effect on binding to nAChR from T.californica." evidence="2">
    <original>P</original>
    <variation>A</variation>
    <location>
        <position position="15"/>
    </location>
</feature>
<feature type="mutagenesis site" description="Moderate effect on binding to nAChR from T.californica." evidence="2">
    <original>R</original>
    <variation>A</variation>
    <location>
        <position position="16"/>
    </location>
</feature>
<feature type="mutagenesis site" description="No effect on binding to nAChR from T.californica." evidence="2">
    <original>P</original>
    <variation>A</variation>
    <location>
        <position position="17"/>
    </location>
</feature>
<feature type="mutagenesis site" description="No effect on binding to nAChR from T.californica." evidence="2">
    <original>R</original>
    <variation>A</variation>
    <location>
        <position position="18"/>
    </location>
</feature>
<feature type="mutagenesis site" description="No effect on binding to nAChR from T.californica." evidence="2">
    <original>P</original>
    <variation>A</variation>
    <location>
        <position position="19"/>
    </location>
</feature>
<feature type="mutagenesis site" description="No effect on binding to nAChR from T.californica." evidence="2">
    <original>K</original>
    <variation>A</variation>
    <location>
        <position position="20"/>
    </location>
</feature>
<feature type="mutagenesis site" description="No effect on binding to nAChR from T.californica." evidence="2">
    <original>P</original>
    <variation>A</variation>
    <location>
        <position position="21"/>
    </location>
</feature>
<keyword id="KW-0008">Acetylcholine receptor inhibiting toxin</keyword>
<keyword id="KW-0903">Direct protein sequencing</keyword>
<keyword id="KW-0872">Ion channel impairing toxin</keyword>
<keyword id="KW-0528">Neurotoxin</keyword>
<keyword id="KW-0629">Postsynaptic neurotoxin</keyword>
<keyword id="KW-0964">Secreted</keyword>
<keyword id="KW-0800">Toxin</keyword>
<name>AON_AZEFE</name>
<accession>B3EWH2</accession>
<sequence>DNWWPKPPHQGPRPPRPRPKP</sequence>
<comment type="function">
    <text evidence="2">In vitro, reversibly blocks human muscle-type nicotinic acetylcholine receptors (nAChR) alpha-1-beta-1-epsilon-delta/CHRNA1-CHRNB1-CHRNE-CHRND (EC(50)=0.44 uM) and alpha-1-beta-1-gamma-delta/CHRNA1-CHRNB1-CHRNG-CHRND (EC(50)=1.56 uM). Binds to nAChR from T.californica (IC(50)=0.03-0.18 uM), human neuronal nAChR alpha-7/CHRNA7 (IC(50)=22 uM) and acetylcholine-binding proteins (AChBP) from L.stagnalis (IC(50)=63 uM) and A.californica (IC(50)=230 uM).</text>
</comment>
<comment type="subunit">
    <text evidence="2">Monomer.</text>
</comment>
<comment type="subcellular location">
    <subcellularLocation>
        <location evidence="4">Secreted</location>
    </subcellularLocation>
</comment>
<comment type="tissue specificity">
    <text evidence="4">Expressed by the venom gland.</text>
</comment>
<comment type="mass spectrometry"/>
<comment type="toxic dose">
    <text evidence="2">LD(50) is 2.6 mg/kg by intraperitoneal injection in mice.</text>
</comment>
<comment type="miscellaneous">
    <text evidence="5">Negative results: has no effect on GABA(A) receptors alpha-1-beta-3-gamma-2/GABRA1-GABRB3-GABRG2 and alpha-2-beta-3-gamma-2/GABRA2-GABRB3-GABRG2 or on receptors HTR3A and HTR3A-HTR3B.</text>
</comment>
<proteinExistence type="evidence at protein level"/>
<dbReference type="GO" id="GO:0005576">
    <property type="term" value="C:extracellular region"/>
    <property type="evidence" value="ECO:0007669"/>
    <property type="project" value="UniProtKB-SubCell"/>
</dbReference>
<dbReference type="GO" id="GO:0030550">
    <property type="term" value="F:acetylcholine receptor inhibitor activity"/>
    <property type="evidence" value="ECO:0007669"/>
    <property type="project" value="UniProtKB-KW"/>
</dbReference>
<dbReference type="GO" id="GO:0099106">
    <property type="term" value="F:ion channel regulator activity"/>
    <property type="evidence" value="ECO:0007669"/>
    <property type="project" value="UniProtKB-KW"/>
</dbReference>
<dbReference type="GO" id="GO:0090729">
    <property type="term" value="F:toxin activity"/>
    <property type="evidence" value="ECO:0007669"/>
    <property type="project" value="UniProtKB-KW"/>
</dbReference>
<evidence type="ECO:0000256" key="1">
    <source>
        <dbReference type="SAM" id="MobiDB-lite"/>
    </source>
</evidence>
<evidence type="ECO:0000269" key="2">
    <source>
    </source>
</evidence>
<evidence type="ECO:0000303" key="3">
    <source>
    </source>
</evidence>
<evidence type="ECO:0000305" key="4"/>
<evidence type="ECO:0000305" key="5">
    <source>
    </source>
</evidence>